<keyword id="KW-0028">Amino-acid biosynthesis</keyword>
<keyword id="KW-0067">ATP-binding</keyword>
<keyword id="KW-0963">Cytoplasm</keyword>
<keyword id="KW-0328">Glycosyltransferase</keyword>
<keyword id="KW-0368">Histidine biosynthesis</keyword>
<keyword id="KW-0547">Nucleotide-binding</keyword>
<keyword id="KW-0808">Transferase</keyword>
<accession>A0K3V1</accession>
<dbReference type="EC" id="2.4.2.17" evidence="1"/>
<dbReference type="EMBL" id="CP000458">
    <property type="protein sequence ID" value="ABK07178.1"/>
    <property type="molecule type" value="Genomic_DNA"/>
</dbReference>
<dbReference type="RefSeq" id="WP_006477129.1">
    <property type="nucleotide sequence ID" value="NC_008542.1"/>
</dbReference>
<dbReference type="SMR" id="A0K3V1"/>
<dbReference type="GeneID" id="56556860"/>
<dbReference type="KEGG" id="bch:Bcen2424_0424"/>
<dbReference type="HOGENOM" id="CLU_038115_2_0_4"/>
<dbReference type="UniPathway" id="UPA00031">
    <property type="reaction ID" value="UER00006"/>
</dbReference>
<dbReference type="GO" id="GO:0005737">
    <property type="term" value="C:cytoplasm"/>
    <property type="evidence" value="ECO:0007669"/>
    <property type="project" value="UniProtKB-SubCell"/>
</dbReference>
<dbReference type="GO" id="GO:0005524">
    <property type="term" value="F:ATP binding"/>
    <property type="evidence" value="ECO:0007669"/>
    <property type="project" value="UniProtKB-KW"/>
</dbReference>
<dbReference type="GO" id="GO:0003879">
    <property type="term" value="F:ATP phosphoribosyltransferase activity"/>
    <property type="evidence" value="ECO:0007669"/>
    <property type="project" value="UniProtKB-UniRule"/>
</dbReference>
<dbReference type="GO" id="GO:0000105">
    <property type="term" value="P:L-histidine biosynthetic process"/>
    <property type="evidence" value="ECO:0007669"/>
    <property type="project" value="UniProtKB-UniRule"/>
</dbReference>
<dbReference type="CDD" id="cd13595">
    <property type="entry name" value="PBP2_HisGs"/>
    <property type="match status" value="1"/>
</dbReference>
<dbReference type="FunFam" id="3.40.190.10:FF:000011">
    <property type="entry name" value="ATP phosphoribosyltransferase"/>
    <property type="match status" value="1"/>
</dbReference>
<dbReference type="Gene3D" id="3.40.190.10">
    <property type="entry name" value="Periplasmic binding protein-like II"/>
    <property type="match status" value="2"/>
</dbReference>
<dbReference type="HAMAP" id="MF_01018">
    <property type="entry name" value="HisG_Short"/>
    <property type="match status" value="1"/>
</dbReference>
<dbReference type="InterPro" id="IPR013820">
    <property type="entry name" value="ATP_PRibTrfase_cat"/>
</dbReference>
<dbReference type="InterPro" id="IPR018198">
    <property type="entry name" value="ATP_PRibTrfase_CS"/>
</dbReference>
<dbReference type="InterPro" id="IPR001348">
    <property type="entry name" value="ATP_PRibTrfase_HisG"/>
</dbReference>
<dbReference type="InterPro" id="IPR024893">
    <property type="entry name" value="ATP_PRibTrfase_HisG_short"/>
</dbReference>
<dbReference type="NCBIfam" id="TIGR00070">
    <property type="entry name" value="hisG"/>
    <property type="match status" value="1"/>
</dbReference>
<dbReference type="PANTHER" id="PTHR21403:SF8">
    <property type="entry name" value="ATP PHOSPHORIBOSYLTRANSFERASE"/>
    <property type="match status" value="1"/>
</dbReference>
<dbReference type="PANTHER" id="PTHR21403">
    <property type="entry name" value="ATP PHOSPHORIBOSYLTRANSFERASE ATP-PRTASE"/>
    <property type="match status" value="1"/>
</dbReference>
<dbReference type="Pfam" id="PF01634">
    <property type="entry name" value="HisG"/>
    <property type="match status" value="1"/>
</dbReference>
<dbReference type="SUPFAM" id="SSF53850">
    <property type="entry name" value="Periplasmic binding protein-like II"/>
    <property type="match status" value="1"/>
</dbReference>
<dbReference type="PROSITE" id="PS01316">
    <property type="entry name" value="ATP_P_PHORIBOSYLTR"/>
    <property type="match status" value="1"/>
</dbReference>
<organism>
    <name type="scientific">Burkholderia cenocepacia (strain HI2424)</name>
    <dbReference type="NCBI Taxonomy" id="331272"/>
    <lineage>
        <taxon>Bacteria</taxon>
        <taxon>Pseudomonadati</taxon>
        <taxon>Pseudomonadota</taxon>
        <taxon>Betaproteobacteria</taxon>
        <taxon>Burkholderiales</taxon>
        <taxon>Burkholderiaceae</taxon>
        <taxon>Burkholderia</taxon>
        <taxon>Burkholderia cepacia complex</taxon>
    </lineage>
</organism>
<protein>
    <recommendedName>
        <fullName evidence="1">ATP phosphoribosyltransferase</fullName>
        <shortName evidence="1">ATP-PRT</shortName>
        <shortName evidence="1">ATP-PRTase</shortName>
        <ecNumber evidence="1">2.4.2.17</ecNumber>
    </recommendedName>
</protein>
<proteinExistence type="inferred from homology"/>
<comment type="function">
    <text evidence="1">Catalyzes the condensation of ATP and 5-phosphoribose 1-diphosphate to form N'-(5'-phosphoribosyl)-ATP (PR-ATP). Has a crucial role in the pathway because the rate of histidine biosynthesis seems to be controlled primarily by regulation of HisG enzymatic activity.</text>
</comment>
<comment type="catalytic activity">
    <reaction evidence="1">
        <text>1-(5-phospho-beta-D-ribosyl)-ATP + diphosphate = 5-phospho-alpha-D-ribose 1-diphosphate + ATP</text>
        <dbReference type="Rhea" id="RHEA:18473"/>
        <dbReference type="ChEBI" id="CHEBI:30616"/>
        <dbReference type="ChEBI" id="CHEBI:33019"/>
        <dbReference type="ChEBI" id="CHEBI:58017"/>
        <dbReference type="ChEBI" id="CHEBI:73183"/>
        <dbReference type="EC" id="2.4.2.17"/>
    </reaction>
</comment>
<comment type="pathway">
    <text evidence="1">Amino-acid biosynthesis; L-histidine biosynthesis; L-histidine from 5-phospho-alpha-D-ribose 1-diphosphate: step 1/9.</text>
</comment>
<comment type="subunit">
    <text evidence="1">Heteromultimer composed of HisG and HisZ subunits.</text>
</comment>
<comment type="subcellular location">
    <subcellularLocation>
        <location evidence="1">Cytoplasm</location>
    </subcellularLocation>
</comment>
<comment type="domain">
    <text>Lacks the C-terminal regulatory region which is replaced by HisZ.</text>
</comment>
<comment type="similarity">
    <text evidence="1">Belongs to the ATP phosphoribosyltransferase family. Short subfamily.</text>
</comment>
<gene>
    <name evidence="1" type="primary">hisG</name>
    <name type="ordered locus">Bcen2424_0424</name>
</gene>
<evidence type="ECO:0000255" key="1">
    <source>
        <dbReference type="HAMAP-Rule" id="MF_01018"/>
    </source>
</evidence>
<feature type="chain" id="PRO_1000063268" description="ATP phosphoribosyltransferase">
    <location>
        <begin position="1"/>
        <end position="217"/>
    </location>
</feature>
<name>HIS1_BURCH</name>
<reference key="1">
    <citation type="submission" date="2006-08" db="EMBL/GenBank/DDBJ databases">
        <title>Complete sequence of chromosome 1 of Burkholderia cenocepacia HI2424.</title>
        <authorList>
            <person name="Copeland A."/>
            <person name="Lucas S."/>
            <person name="Lapidus A."/>
            <person name="Barry K."/>
            <person name="Detter J.C."/>
            <person name="Glavina del Rio T."/>
            <person name="Hammon N."/>
            <person name="Israni S."/>
            <person name="Pitluck S."/>
            <person name="Chain P."/>
            <person name="Malfatti S."/>
            <person name="Shin M."/>
            <person name="Vergez L."/>
            <person name="Schmutz J."/>
            <person name="Larimer F."/>
            <person name="Land M."/>
            <person name="Hauser L."/>
            <person name="Kyrpides N."/>
            <person name="Kim E."/>
            <person name="LiPuma J.J."/>
            <person name="Gonzalez C.F."/>
            <person name="Konstantinidis K."/>
            <person name="Tiedje J.M."/>
            <person name="Richardson P."/>
        </authorList>
    </citation>
    <scope>NUCLEOTIDE SEQUENCE [LARGE SCALE GENOMIC DNA]</scope>
    <source>
        <strain>HI2424</strain>
    </source>
</reference>
<sequence length="217" mass="23049">MTAPLTLALSKGRIFEETLPLLAAAGVQVAEDPETSRKLILPTTDPNLRVIIVRASDVPTYVEYGAADFGVAGKDVLVEHGGSGLYQPIDLNIARCRMSVAVPAGFDYANAVRQGARLRVATKYVETAREHFAAKGVHVDLIKLYGSMELAPLVGLADAIVDLVSSGGTLKANNLVEVEEIMAISSRLVVNQAALKLKRAALKPILDAFERASQNGG</sequence>